<dbReference type="EMBL" id="BC149236">
    <property type="protein sequence ID" value="AAI49237.1"/>
    <property type="molecule type" value="mRNA"/>
</dbReference>
<dbReference type="RefSeq" id="NP_001095450.1">
    <property type="nucleotide sequence ID" value="NM_001101980.1"/>
</dbReference>
<dbReference type="SMR" id="A6QPB3"/>
<dbReference type="FunCoup" id="A6QPB3">
    <property type="interactions" value="92"/>
</dbReference>
<dbReference type="STRING" id="9913.ENSBTAP00000057972"/>
<dbReference type="GlyCosmos" id="A6QPB3">
    <property type="glycosylation" value="1 site, No reported glycans"/>
</dbReference>
<dbReference type="GlyGen" id="A6QPB3">
    <property type="glycosylation" value="1 site"/>
</dbReference>
<dbReference type="PaxDb" id="9913-ENSBTAP00000013271"/>
<dbReference type="PeptideAtlas" id="A6QPB3"/>
<dbReference type="GeneID" id="513804"/>
<dbReference type="KEGG" id="bta:513804"/>
<dbReference type="CTD" id="1308"/>
<dbReference type="eggNOG" id="KOG3544">
    <property type="taxonomic scope" value="Eukaryota"/>
</dbReference>
<dbReference type="HOGENOM" id="CLU_004285_0_0_1"/>
<dbReference type="InParanoid" id="A6QPB3"/>
<dbReference type="OrthoDB" id="9950082at2759"/>
<dbReference type="TreeFam" id="TF332289"/>
<dbReference type="Proteomes" id="UP000009136">
    <property type="component" value="Unplaced"/>
</dbReference>
<dbReference type="GO" id="GO:0005604">
    <property type="term" value="C:basement membrane"/>
    <property type="evidence" value="ECO:0007669"/>
    <property type="project" value="UniProtKB-SubCell"/>
</dbReference>
<dbReference type="GO" id="GO:0005581">
    <property type="term" value="C:collagen trimer"/>
    <property type="evidence" value="ECO:0007669"/>
    <property type="project" value="UniProtKB-KW"/>
</dbReference>
<dbReference type="GO" id="GO:0062023">
    <property type="term" value="C:collagen-containing extracellular matrix"/>
    <property type="evidence" value="ECO:0000318"/>
    <property type="project" value="GO_Central"/>
</dbReference>
<dbReference type="GO" id="GO:0005615">
    <property type="term" value="C:extracellular space"/>
    <property type="evidence" value="ECO:0000318"/>
    <property type="project" value="GO_Central"/>
</dbReference>
<dbReference type="GO" id="GO:0030056">
    <property type="term" value="C:hemidesmosome"/>
    <property type="evidence" value="ECO:0000250"/>
    <property type="project" value="UniProtKB"/>
</dbReference>
<dbReference type="GO" id="GO:0016020">
    <property type="term" value="C:membrane"/>
    <property type="evidence" value="ECO:0007669"/>
    <property type="project" value="UniProtKB-SubCell"/>
</dbReference>
<dbReference type="GO" id="GO:0030020">
    <property type="term" value="F:extracellular matrix structural constituent conferring tensile strength"/>
    <property type="evidence" value="ECO:0000318"/>
    <property type="project" value="GO_Central"/>
</dbReference>
<dbReference type="GO" id="GO:0031581">
    <property type="term" value="P:hemidesmosome assembly"/>
    <property type="evidence" value="ECO:0000250"/>
    <property type="project" value="UniProtKB"/>
</dbReference>
<dbReference type="FunFam" id="1.20.5.320:FF:000009">
    <property type="entry name" value="Collagen alpha-1(XVII) chain"/>
    <property type="match status" value="1"/>
</dbReference>
<dbReference type="FunFam" id="1.20.5.320:FF:000003">
    <property type="entry name" value="Collagen, type XVII, alpha 1"/>
    <property type="match status" value="1"/>
</dbReference>
<dbReference type="Gene3D" id="1.20.5.320">
    <property type="entry name" value="6-Phosphogluconate Dehydrogenase, domain 3"/>
    <property type="match status" value="3"/>
</dbReference>
<dbReference type="InterPro" id="IPR008160">
    <property type="entry name" value="Collagen"/>
</dbReference>
<dbReference type="InterPro" id="IPR050149">
    <property type="entry name" value="Collagen_superfamily"/>
</dbReference>
<dbReference type="PANTHER" id="PTHR24023">
    <property type="entry name" value="COLLAGEN ALPHA"/>
    <property type="match status" value="1"/>
</dbReference>
<dbReference type="PANTHER" id="PTHR24023:SF1082">
    <property type="entry name" value="COLLAGEN TRIPLE HELIX REPEAT"/>
    <property type="match status" value="1"/>
</dbReference>
<dbReference type="Pfam" id="PF01391">
    <property type="entry name" value="Collagen"/>
    <property type="match status" value="5"/>
</dbReference>
<protein>
    <recommendedName>
        <fullName>Collagen alpha-1(XVII) chain</fullName>
    </recommendedName>
    <alternativeName>
        <fullName>180 kDa bullous pemphigoid antigen 2</fullName>
    </alternativeName>
    <alternativeName>
        <fullName>Bullous pemphigoid antigen 2</fullName>
    </alternativeName>
    <component>
        <recommendedName>
            <fullName>120 kDa linear IgA disease antigen homolog</fullName>
        </recommendedName>
    </component>
</protein>
<evidence type="ECO:0000250" key="1"/>
<evidence type="ECO:0000255" key="2"/>
<evidence type="ECO:0000256" key="3">
    <source>
        <dbReference type="SAM" id="MobiDB-lite"/>
    </source>
</evidence>
<evidence type="ECO:0000269" key="4">
    <source>
    </source>
</evidence>
<evidence type="ECO:0000269" key="5">
    <source>
    </source>
</evidence>
<proteinExistence type="evidence at transcript level"/>
<gene>
    <name type="primary">COL17A1</name>
    <name type="synonym">BP180</name>
    <name type="synonym">BPAG2</name>
</gene>
<sequence>MDITQKNKRDGTEVTERIITETVTTRLTSLPPKGGTSNGYAKTGSLGGGSRLEKQSLTHGSSGYINSSGSLRGNASTSSYRRAHSPASTLPNSPGSTFERKTHVTRHGTYEGSSSGNSSPEYPRKEFASSSTRGRSQTRESEIRVRLQSASPSTRWTELDDVKRLLKGSRSASVSPTRNSSNTLPIPKKGTVETKVVTASSQSVSGTYDTTILDANLPSHVWSSTLPAGSSMGTYHNNITTQSSSLLNTNAYSAGSVFGVPNNMASCSATLQPGISTSSSVFGMQNNLAPSSSTLSHGMAATSTAYGVKKNMPQSPTAVSTGVSTSAASTTNVQNDDLLHKDCKFLILEKDNTPAKKEMELLIMTKDSGKVFTASPASVAATSFSEDTLKKEKQAAYTDTYLVSEANGDVKTVTAKGNGASADIHGYDHRRGGGGGGGSGGALGSGAAGGGGKGSWGAAPTWCPCGSWCSWWKWLLGLLLTWLLLLGLLFGLIALAEEVRKLKARVEELEKMRGRLSYNEKMERSSQDSVQGVAPRLGEGLGKSELDDYNLEDVWQFMKVRLMTEQENGNLRGSPGPKGDMGVQGPKGDRGFPGTPGIPGPLGHQGPEGPKGQKGNVGEPGMEGPMGQRGREGPMGPRGEPGPPGFGEKGDRGDAGKPGIPGPPGVPGSVGPKGSIGPQGLRGEVGLPGIKGDKGPMGPPGPKGDQGEKGPRGLTGEPGLKGLPGAVGEPGAKGAMGPAGPDGHQGPRGEQGLPGMPGTRGLPGPSGDPGKPGLTGPQGPQGIPGTPGRPGVKGEPGAPGKIMTSEGSSTITVPGPPGPPGAMGPPGPPGAPGPVGPAGLPGQQGPRGEPGLAGESFMGSSSSFSEVLSTQGIDLRGPPGPPGPPGPPGEGLPGPPGPPGSLLTSSETFFSGPPGPPGPPGPKGDQGPPGPRGHQGERGFPGLSGSGSSSLGLNLQGPPGPPGPQGPKGDKGDPGVPGAPGIPGGPSRGGSSSSTTFMQGPPGPPGPPGPPGSLSSSGLEIQQYISDYMQSDSIRPYLSGVQGPPGPPGPPGPVTTITGETFNYSELASLVVSYLQTSGYNIGTSSTSISSEDILAALRRDDVRQYLQQYLMPQGAGGDWFLQSLDYAELSNRILSYMSSTGVSIGLPGPPGPPGLPGTSYEELLSLLQGSEFRGIVGPPGPPGPPGLPGSSWSSISTEDLSSYLQTAGLSSIPGPPGPPGPPGPRGPPGISGALATYAAENSDSFRSELISYLTSPDVRSFIVGPPGPPGPQGPPGDTRLVSTDSSYSRSGSSSSFSRDTSYSSSMGIGGASGGSLGEAGAFGMDMGRGYGAAAESGMYGGNGRFGTSFAGGLDYNELAVRVSESLQRQGLLQGMAYTVQGPPGRPGPQGPPGISKIFSAYSNVTEDLMDFFRTYGAIPGPPGQKGEMGIPGPKGERGPAGPPGPRGHKGEKGDKGDQFYIGRRRRSIAVKP</sequence>
<accession>A6QPB3</accession>
<keyword id="KW-0084">Basement membrane</keyword>
<keyword id="KW-0965">Cell junction</keyword>
<keyword id="KW-0176">Collagen</keyword>
<keyword id="KW-1015">Disulfide bond</keyword>
<keyword id="KW-0272">Extracellular matrix</keyword>
<keyword id="KW-0325">Glycoprotein</keyword>
<keyword id="KW-0379">Hydroxylation</keyword>
<keyword id="KW-0472">Membrane</keyword>
<keyword id="KW-1185">Reference proteome</keyword>
<keyword id="KW-0677">Repeat</keyword>
<keyword id="KW-0964">Secreted</keyword>
<keyword id="KW-0735">Signal-anchor</keyword>
<keyword id="KW-0812">Transmembrane</keyword>
<keyword id="KW-1133">Transmembrane helix</keyword>
<reference key="1">
    <citation type="submission" date="2007-07" db="EMBL/GenBank/DDBJ databases">
        <authorList>
            <consortium name="NIH - Mammalian Gene Collection (MGC) project"/>
        </authorList>
    </citation>
    <scope>NUCLEOTIDE SEQUENCE [LARGE SCALE MRNA]</scope>
    <source>
        <strain>Hereford</strain>
        <tissue>Fetal skin</tissue>
    </source>
</reference>
<reference key="2">
    <citation type="journal article" date="1998" name="J. Biol. Chem.">
        <title>Cleavage of BP180, a 180-kDa bullous pemphigoid antigen, yields a 120-kDa collagenous extracellular polypeptide.</title>
        <authorList>
            <person name="Hirako Y."/>
            <person name="Usukura J."/>
            <person name="Uematsu J."/>
            <person name="Hashimoto T."/>
            <person name="Kitajima Y."/>
            <person name="Owaribe K."/>
        </authorList>
    </citation>
    <scope>SUBCELLULAR LOCATION</scope>
    <scope>SHEDDING</scope>
</reference>
<reference key="3">
    <citation type="journal article" date="2003" name="J. Biochem.">
        <title>Extracellular cleavage of bullous pemphigoid antigen 180/type XVII collagen and its involvement in hemidesmosomal disassembly.</title>
        <authorList>
            <person name="Hirako Y."/>
            <person name="Yoshino K."/>
            <person name="Zillikens D."/>
            <person name="Owaribe K."/>
        </authorList>
    </citation>
    <scope>SHEDDING</scope>
    <scope>FUNCTION</scope>
</reference>
<name>COHA1_BOVIN</name>
<comment type="function">
    <text evidence="1">May play a role in the integrity of hemidesmosome and the attachment of basal keratinocytes to the underlying basement membrane.</text>
</comment>
<comment type="function">
    <text evidence="4">The 120 kDa linear IgA disease antigen homolog is an anchoring filament component involved in dermal-epidermal cohesion.</text>
</comment>
<comment type="subunit">
    <text evidence="1">Homotrimers of alpha 1(XVII)chains. Interacts (via cytoplasmic region) with ITGB4 (via cytoplasmic region). Interacts (via cytoplasmic region) with DST (via N-terminus). Interacts (via N-terminus) with PLEC. Interacts (via cytoplasmic region) with DSP (By similarity).</text>
</comment>
<comment type="subcellular location">
    <subcellularLocation>
        <location evidence="5">Cell junction</location>
        <location evidence="5">Hemidesmosome</location>
    </subcellularLocation>
    <subcellularLocation>
        <location evidence="5">Membrane</location>
        <topology evidence="5">Single-pass type II membrane protein</topology>
    </subcellularLocation>
    <text evidence="1">Localized along the plasma membrane of the hemidesmosome.</text>
</comment>
<comment type="subcellular location">
    <molecule>120 kDa linear IgA disease antigen homolog</molecule>
    <subcellularLocation>
        <location>Secreted</location>
        <location>Extracellular space</location>
        <location>Extracellular matrix</location>
        <location>Basement membrane</location>
    </subcellularLocation>
</comment>
<comment type="PTM">
    <text evidence="1">The intracellular/endo domain is disulfide-linked.</text>
</comment>
<comment type="PTM">
    <text>Prolines at the third position of the tripeptide repeating unit (G-X-Y) are hydroxylated in some or all of the chains.</text>
</comment>
<comment type="PTM">
    <text>The ectodomain is shedded from the surface of keratinocytes resulting in a 120-kDa soluble form, also named as 120 kDa linear IgA disease antigen homolog. The shedding is mediated by membrane-bound metalloproteases.</text>
</comment>
<organism>
    <name type="scientific">Bos taurus</name>
    <name type="common">Bovine</name>
    <dbReference type="NCBI Taxonomy" id="9913"/>
    <lineage>
        <taxon>Eukaryota</taxon>
        <taxon>Metazoa</taxon>
        <taxon>Chordata</taxon>
        <taxon>Craniata</taxon>
        <taxon>Vertebrata</taxon>
        <taxon>Euteleostomi</taxon>
        <taxon>Mammalia</taxon>
        <taxon>Eutheria</taxon>
        <taxon>Laurasiatheria</taxon>
        <taxon>Artiodactyla</taxon>
        <taxon>Ruminantia</taxon>
        <taxon>Pecora</taxon>
        <taxon>Bovidae</taxon>
        <taxon>Bovinae</taxon>
        <taxon>Bos</taxon>
    </lineage>
</organism>
<feature type="chain" id="PRO_0000342552" description="Collagen alpha-1(XVII) chain">
    <location>
        <begin position="1"/>
        <end position="1473"/>
    </location>
</feature>
<feature type="chain" id="PRO_0000342553" description="120 kDa linear IgA disease antigen homolog">
    <location>
        <begin status="unknown"/>
        <end position="1473"/>
    </location>
</feature>
<feature type="topological domain" description="Cytoplasmic" evidence="2">
    <location>
        <begin position="1"/>
        <end position="474"/>
    </location>
</feature>
<feature type="transmembrane region" description="Helical; Signal-anchor for type II membrane protein" evidence="2">
    <location>
        <begin position="475"/>
        <end position="495"/>
    </location>
</feature>
<feature type="topological domain" description="Extracellular" evidence="2">
    <location>
        <begin position="496"/>
        <end position="1473"/>
    </location>
</feature>
<feature type="region of interest" description="Nonhelical region (NC16)">
    <location>
        <begin position="1"/>
        <end position="572"/>
    </location>
</feature>
<feature type="region of interest" description="Disordered" evidence="3">
    <location>
        <begin position="1"/>
        <end position="155"/>
    </location>
</feature>
<feature type="region of interest" description="Necessary for interaction with DST and for the recruitment of DST to hemidesmosome" evidence="1">
    <location>
        <begin position="146"/>
        <end position="231"/>
    </location>
</feature>
<feature type="region of interest" description="Disordered" evidence="3">
    <location>
        <begin position="168"/>
        <end position="188"/>
    </location>
</feature>
<feature type="region of interest" description="Disordered" evidence="3">
    <location>
        <begin position="567"/>
        <end position="1017"/>
    </location>
</feature>
<feature type="region of interest" description="Triple-helical region">
    <location>
        <begin position="573"/>
        <end position="1459"/>
    </location>
</feature>
<feature type="region of interest" description="Disordered" evidence="3">
    <location>
        <begin position="1173"/>
        <end position="1234"/>
    </location>
</feature>
<feature type="region of interest" description="Disordered" evidence="3">
    <location>
        <begin position="1261"/>
        <end position="1308"/>
    </location>
</feature>
<feature type="region of interest" description="Disordered" evidence="3">
    <location>
        <begin position="1417"/>
        <end position="1473"/>
    </location>
</feature>
<feature type="region of interest" description="Nonhelical region (NC1)">
    <location>
        <begin position="1460"/>
        <end position="1473"/>
    </location>
</feature>
<feature type="compositionally biased region" description="Basic and acidic residues" evidence="3">
    <location>
        <begin position="1"/>
        <end position="19"/>
    </location>
</feature>
<feature type="compositionally biased region" description="Polar residues" evidence="3">
    <location>
        <begin position="57"/>
        <end position="96"/>
    </location>
</feature>
<feature type="compositionally biased region" description="Polar residues" evidence="3">
    <location>
        <begin position="111"/>
        <end position="120"/>
    </location>
</feature>
<feature type="compositionally biased region" description="Polar residues" evidence="3">
    <location>
        <begin position="170"/>
        <end position="184"/>
    </location>
</feature>
<feature type="compositionally biased region" description="Low complexity" evidence="3">
    <location>
        <begin position="619"/>
        <end position="638"/>
    </location>
</feature>
<feature type="compositionally biased region" description="Low complexity" evidence="3">
    <location>
        <begin position="667"/>
        <end position="678"/>
    </location>
</feature>
<feature type="compositionally biased region" description="Low complexity" evidence="3">
    <location>
        <begin position="729"/>
        <end position="742"/>
    </location>
</feature>
<feature type="compositionally biased region" description="Low complexity" evidence="3">
    <location>
        <begin position="769"/>
        <end position="790"/>
    </location>
</feature>
<feature type="compositionally biased region" description="Pro residues" evidence="3">
    <location>
        <begin position="814"/>
        <end position="835"/>
    </location>
</feature>
<feature type="compositionally biased region" description="Low complexity" evidence="3">
    <location>
        <begin position="837"/>
        <end position="847"/>
    </location>
</feature>
<feature type="compositionally biased region" description="Low complexity" evidence="3">
    <location>
        <begin position="854"/>
        <end position="866"/>
    </location>
</feature>
<feature type="compositionally biased region" description="Pro residues" evidence="3">
    <location>
        <begin position="878"/>
        <end position="899"/>
    </location>
</feature>
<feature type="compositionally biased region" description="Pro residues" evidence="3">
    <location>
        <begin position="913"/>
        <end position="922"/>
    </location>
</feature>
<feature type="compositionally biased region" description="Low complexity" evidence="3">
    <location>
        <begin position="940"/>
        <end position="957"/>
    </location>
</feature>
<feature type="compositionally biased region" description="Pro residues" evidence="3">
    <location>
        <begin position="1001"/>
        <end position="1011"/>
    </location>
</feature>
<feature type="compositionally biased region" description="Pro residues" evidence="3">
    <location>
        <begin position="1179"/>
        <end position="1188"/>
    </location>
</feature>
<feature type="compositionally biased region" description="Polar residues" evidence="3">
    <location>
        <begin position="1198"/>
        <end position="1210"/>
    </location>
</feature>
<feature type="compositionally biased region" description="Pro residues" evidence="3">
    <location>
        <begin position="1214"/>
        <end position="1228"/>
    </location>
</feature>
<feature type="compositionally biased region" description="Pro residues" evidence="3">
    <location>
        <begin position="1266"/>
        <end position="1275"/>
    </location>
</feature>
<feature type="compositionally biased region" description="Low complexity" evidence="3">
    <location>
        <begin position="1283"/>
        <end position="1307"/>
    </location>
</feature>
<feature type="compositionally biased region" description="Basic and acidic residues" evidence="3">
    <location>
        <begin position="1449"/>
        <end position="1458"/>
    </location>
</feature>
<feature type="compositionally biased region" description="Basic residues" evidence="3">
    <location>
        <begin position="1463"/>
        <end position="1473"/>
    </location>
</feature>
<feature type="glycosylation site" description="N-linked (GlcNAc...) asparagine" evidence="2">
    <location>
        <position position="1404"/>
    </location>
</feature>